<organism>
    <name type="scientific">Meyerozyma guilliermondii (strain ATCC 6260 / CBS 566 / DSM 6381 / JCM 1539 / NBRC 10279 / NRRL Y-324)</name>
    <name type="common">Yeast</name>
    <name type="synonym">Candida guilliermondii</name>
    <dbReference type="NCBI Taxonomy" id="294746"/>
    <lineage>
        <taxon>Eukaryota</taxon>
        <taxon>Fungi</taxon>
        <taxon>Dikarya</taxon>
        <taxon>Ascomycota</taxon>
        <taxon>Saccharomycotina</taxon>
        <taxon>Pichiomycetes</taxon>
        <taxon>Debaryomycetaceae</taxon>
        <taxon>Meyerozyma</taxon>
    </lineage>
</organism>
<sequence>MSQLHTNSKEVHASSSNSQDDKLQKRRARLAAWNQKKASSEKSENNEDKKPKIESSKLQEWIKRRQQKSATPEVPSTEASQKPTSIKPILRARLSTSSSKQTQLVPKKRSIFDDDDEQDDAKTAKKDFRIPNEKKLPASTEEQESEDEEKVLERIRQAESGTSFLVESGFEQDLGADSGISGSEGDEEDDEEGQQRLLSEKLQKLTNKEKKLMALDYTQMEYTSVRKKFYTPPEELKDVPPEKVTALRTAMDGIKVRGSDCPMPIQKWAQLGLPSSIMTVLEEKLGYDTPSPIQSQALPAIMSGRDIIGVANTGSGKTLAFVIPLIRHIMDQPPLKSGDGPIGVILTPTRELALQIQKELVNFTQAVELSVCCCYGGSPIESQIADLKRGTEIIVGTPGRVIDLLAANGGRVTNLRRTTFLVLDEADRMFDMGFEPQVNKVLSQIRPDKQMVLFSATFPKKLESLARSFLVDPIEIVAGGISVVAPEITQRVVLIDDSGDISQKKLQALLKIVDEFSVEDPEGKILIFVDKQEAADDLMVRLLNNQISCIVIHGGKDQVDRKHAIKQFSDKNGLRVLIATSIAARGLDVRGLNLVINYDAPSHMEDYVHRVGRTGRAGATGTAVTLVLSSQEREIRDLVRAMKMSGKVDDIPAELQSIADKFLKKVKSGEEKFNSGFGGKGLENLQERRDNVREIEMQMYGDKVKETNGVSNSSAGRKALGTPEAAEIAGIKLPDFDIVEGRAPETSGPDRCKFHSRIEINDLPQKARWVVVNRDSLSKIIDATSTSITSKGQYYPPNSKLPKPTIKYGREIPPPPKLYLLVEGLTKSAVQEANKLLRQKMIEGVDVATEEDAKAPIGRYNV</sequence>
<proteinExistence type="inferred from homology"/>
<dbReference type="EC" id="3.6.4.13"/>
<dbReference type="EMBL" id="CH408156">
    <property type="protein sequence ID" value="EDK37207.2"/>
    <property type="molecule type" value="Genomic_DNA"/>
</dbReference>
<dbReference type="RefSeq" id="XP_001485634.1">
    <property type="nucleotide sequence ID" value="XM_001485584.1"/>
</dbReference>
<dbReference type="SMR" id="A5DDF4"/>
<dbReference type="FunCoup" id="A5DDF4">
    <property type="interactions" value="1057"/>
</dbReference>
<dbReference type="STRING" id="294746.A5DDF4"/>
<dbReference type="GeneID" id="5127671"/>
<dbReference type="KEGG" id="pgu:PGUG_01305"/>
<dbReference type="VEuPathDB" id="FungiDB:PGUG_01305"/>
<dbReference type="eggNOG" id="KOG0334">
    <property type="taxonomic scope" value="Eukaryota"/>
</dbReference>
<dbReference type="HOGENOM" id="CLU_003041_0_2_1"/>
<dbReference type="InParanoid" id="A5DDF4"/>
<dbReference type="OMA" id="FAQYVHT"/>
<dbReference type="OrthoDB" id="196131at2759"/>
<dbReference type="Proteomes" id="UP000001997">
    <property type="component" value="Unassembled WGS sequence"/>
</dbReference>
<dbReference type="GO" id="GO:0005634">
    <property type="term" value="C:nucleus"/>
    <property type="evidence" value="ECO:0007669"/>
    <property type="project" value="UniProtKB-SubCell"/>
</dbReference>
<dbReference type="GO" id="GO:0005524">
    <property type="term" value="F:ATP binding"/>
    <property type="evidence" value="ECO:0007669"/>
    <property type="project" value="UniProtKB-KW"/>
</dbReference>
<dbReference type="GO" id="GO:0016887">
    <property type="term" value="F:ATP hydrolysis activity"/>
    <property type="evidence" value="ECO:0007669"/>
    <property type="project" value="RHEA"/>
</dbReference>
<dbReference type="GO" id="GO:0003676">
    <property type="term" value="F:nucleic acid binding"/>
    <property type="evidence" value="ECO:0007669"/>
    <property type="project" value="InterPro"/>
</dbReference>
<dbReference type="GO" id="GO:0003724">
    <property type="term" value="F:RNA helicase activity"/>
    <property type="evidence" value="ECO:0007669"/>
    <property type="project" value="UniProtKB-EC"/>
</dbReference>
<dbReference type="GO" id="GO:0006397">
    <property type="term" value="P:mRNA processing"/>
    <property type="evidence" value="ECO:0007669"/>
    <property type="project" value="UniProtKB-KW"/>
</dbReference>
<dbReference type="GO" id="GO:0008380">
    <property type="term" value="P:RNA splicing"/>
    <property type="evidence" value="ECO:0007669"/>
    <property type="project" value="UniProtKB-KW"/>
</dbReference>
<dbReference type="CDD" id="cd17953">
    <property type="entry name" value="DEADc_DDX46"/>
    <property type="match status" value="1"/>
</dbReference>
<dbReference type="CDD" id="cd18787">
    <property type="entry name" value="SF2_C_DEAD"/>
    <property type="match status" value="1"/>
</dbReference>
<dbReference type="FunFam" id="3.40.50.300:FF:000079">
    <property type="entry name" value="probable ATP-dependent RNA helicase DDX17"/>
    <property type="match status" value="1"/>
</dbReference>
<dbReference type="Gene3D" id="3.40.50.300">
    <property type="entry name" value="P-loop containing nucleotide triphosphate hydrolases"/>
    <property type="match status" value="2"/>
</dbReference>
<dbReference type="InterPro" id="IPR011545">
    <property type="entry name" value="DEAD/DEAH_box_helicase_dom"/>
</dbReference>
<dbReference type="InterPro" id="IPR014001">
    <property type="entry name" value="Helicase_ATP-bd"/>
</dbReference>
<dbReference type="InterPro" id="IPR001650">
    <property type="entry name" value="Helicase_C-like"/>
</dbReference>
<dbReference type="InterPro" id="IPR027417">
    <property type="entry name" value="P-loop_NTPase"/>
</dbReference>
<dbReference type="InterPro" id="IPR000629">
    <property type="entry name" value="RNA-helicase_DEAD-box_CS"/>
</dbReference>
<dbReference type="InterPro" id="IPR014014">
    <property type="entry name" value="RNA_helicase_DEAD_Q_motif"/>
</dbReference>
<dbReference type="PANTHER" id="PTHR47958">
    <property type="entry name" value="ATP-DEPENDENT RNA HELICASE DBP3"/>
    <property type="match status" value="1"/>
</dbReference>
<dbReference type="Pfam" id="PF00270">
    <property type="entry name" value="DEAD"/>
    <property type="match status" value="1"/>
</dbReference>
<dbReference type="Pfam" id="PF00271">
    <property type="entry name" value="Helicase_C"/>
    <property type="match status" value="1"/>
</dbReference>
<dbReference type="SMART" id="SM00487">
    <property type="entry name" value="DEXDc"/>
    <property type="match status" value="1"/>
</dbReference>
<dbReference type="SMART" id="SM00490">
    <property type="entry name" value="HELICc"/>
    <property type="match status" value="1"/>
</dbReference>
<dbReference type="SUPFAM" id="SSF52540">
    <property type="entry name" value="P-loop containing nucleoside triphosphate hydrolases"/>
    <property type="match status" value="2"/>
</dbReference>
<dbReference type="PROSITE" id="PS00039">
    <property type="entry name" value="DEAD_ATP_HELICASE"/>
    <property type="match status" value="1"/>
</dbReference>
<dbReference type="PROSITE" id="PS51192">
    <property type="entry name" value="HELICASE_ATP_BIND_1"/>
    <property type="match status" value="1"/>
</dbReference>
<dbReference type="PROSITE" id="PS51194">
    <property type="entry name" value="HELICASE_CTER"/>
    <property type="match status" value="1"/>
</dbReference>
<dbReference type="PROSITE" id="PS51195">
    <property type="entry name" value="Q_MOTIF"/>
    <property type="match status" value="1"/>
</dbReference>
<keyword id="KW-0067">ATP-binding</keyword>
<keyword id="KW-0347">Helicase</keyword>
<keyword id="KW-0378">Hydrolase</keyword>
<keyword id="KW-0507">mRNA processing</keyword>
<keyword id="KW-0508">mRNA splicing</keyword>
<keyword id="KW-0547">Nucleotide-binding</keyword>
<keyword id="KW-0539">Nucleus</keyword>
<keyword id="KW-1185">Reference proteome</keyword>
<gene>
    <name type="primary">PRP5</name>
    <name type="ORF">PGUG_01305</name>
</gene>
<accession>A5DDF4</accession>
<name>PRP5_PICGU</name>
<evidence type="ECO:0000250" key="1"/>
<evidence type="ECO:0000255" key="2">
    <source>
        <dbReference type="PROSITE-ProRule" id="PRU00541"/>
    </source>
</evidence>
<evidence type="ECO:0000255" key="3">
    <source>
        <dbReference type="PROSITE-ProRule" id="PRU00542"/>
    </source>
</evidence>
<evidence type="ECO:0000256" key="4">
    <source>
        <dbReference type="SAM" id="MobiDB-lite"/>
    </source>
</evidence>
<evidence type="ECO:0000305" key="5"/>
<feature type="chain" id="PRO_0000294650" description="Pre-mRNA-processing ATP-dependent RNA helicase PRP5">
    <location>
        <begin position="1"/>
        <end position="862"/>
    </location>
</feature>
<feature type="domain" description="Helicase ATP-binding" evidence="2">
    <location>
        <begin position="298"/>
        <end position="476"/>
    </location>
</feature>
<feature type="domain" description="Helicase C-terminal" evidence="3">
    <location>
        <begin position="505"/>
        <end position="659"/>
    </location>
</feature>
<feature type="region of interest" description="Disordered" evidence="4">
    <location>
        <begin position="1"/>
        <end position="195"/>
    </location>
</feature>
<feature type="short sequence motif" description="Q motif">
    <location>
        <begin position="266"/>
        <end position="295"/>
    </location>
</feature>
<feature type="short sequence motif" description="DEAD box">
    <location>
        <begin position="424"/>
        <end position="427"/>
    </location>
</feature>
<feature type="compositionally biased region" description="Basic and acidic residues" evidence="4">
    <location>
        <begin position="38"/>
        <end position="63"/>
    </location>
</feature>
<feature type="compositionally biased region" description="Polar residues" evidence="4">
    <location>
        <begin position="94"/>
        <end position="104"/>
    </location>
</feature>
<feature type="compositionally biased region" description="Basic and acidic residues" evidence="4">
    <location>
        <begin position="120"/>
        <end position="136"/>
    </location>
</feature>
<feature type="compositionally biased region" description="Acidic residues" evidence="4">
    <location>
        <begin position="141"/>
        <end position="150"/>
    </location>
</feature>
<feature type="binding site" evidence="2">
    <location>
        <begin position="311"/>
        <end position="318"/>
    </location>
    <ligand>
        <name>ATP</name>
        <dbReference type="ChEBI" id="CHEBI:30616"/>
    </ligand>
</feature>
<protein>
    <recommendedName>
        <fullName>Pre-mRNA-processing ATP-dependent RNA helicase PRP5</fullName>
        <ecNumber>3.6.4.13</ecNumber>
    </recommendedName>
</protein>
<reference key="1">
    <citation type="journal article" date="2009" name="Nature">
        <title>Evolution of pathogenicity and sexual reproduction in eight Candida genomes.</title>
        <authorList>
            <person name="Butler G."/>
            <person name="Rasmussen M.D."/>
            <person name="Lin M.F."/>
            <person name="Santos M.A.S."/>
            <person name="Sakthikumar S."/>
            <person name="Munro C.A."/>
            <person name="Rheinbay E."/>
            <person name="Grabherr M."/>
            <person name="Forche A."/>
            <person name="Reedy J.L."/>
            <person name="Agrafioti I."/>
            <person name="Arnaud M.B."/>
            <person name="Bates S."/>
            <person name="Brown A.J.P."/>
            <person name="Brunke S."/>
            <person name="Costanzo M.C."/>
            <person name="Fitzpatrick D.A."/>
            <person name="de Groot P.W.J."/>
            <person name="Harris D."/>
            <person name="Hoyer L.L."/>
            <person name="Hube B."/>
            <person name="Klis F.M."/>
            <person name="Kodira C."/>
            <person name="Lennard N."/>
            <person name="Logue M.E."/>
            <person name="Martin R."/>
            <person name="Neiman A.M."/>
            <person name="Nikolaou E."/>
            <person name="Quail M.A."/>
            <person name="Quinn J."/>
            <person name="Santos M.C."/>
            <person name="Schmitzberger F.F."/>
            <person name="Sherlock G."/>
            <person name="Shah P."/>
            <person name="Silverstein K.A.T."/>
            <person name="Skrzypek M.S."/>
            <person name="Soll D."/>
            <person name="Staggs R."/>
            <person name="Stansfield I."/>
            <person name="Stumpf M.P.H."/>
            <person name="Sudbery P.E."/>
            <person name="Srikantha T."/>
            <person name="Zeng Q."/>
            <person name="Berman J."/>
            <person name="Berriman M."/>
            <person name="Heitman J."/>
            <person name="Gow N.A.R."/>
            <person name="Lorenz M.C."/>
            <person name="Birren B.W."/>
            <person name="Kellis M."/>
            <person name="Cuomo C.A."/>
        </authorList>
    </citation>
    <scope>NUCLEOTIDE SEQUENCE [LARGE SCALE GENOMIC DNA]</scope>
    <source>
        <strain>ATCC 6260 / CBS 566 / DSM 6381 / JCM 1539 / NBRC 10279 / NRRL Y-324</strain>
    </source>
</reference>
<comment type="function">
    <text evidence="1">ATP-dependent RNA helicase involved spliceosome assembly and in nuclear splicing. Catalyzes an ATP-dependent conformational change of U2 snRNP. Bridges U1 and U2 snRNPs and enables stable U2 snRNP association with intron RNA (By similarity).</text>
</comment>
<comment type="catalytic activity">
    <reaction>
        <text>ATP + H2O = ADP + phosphate + H(+)</text>
        <dbReference type="Rhea" id="RHEA:13065"/>
        <dbReference type="ChEBI" id="CHEBI:15377"/>
        <dbReference type="ChEBI" id="CHEBI:15378"/>
        <dbReference type="ChEBI" id="CHEBI:30616"/>
        <dbReference type="ChEBI" id="CHEBI:43474"/>
        <dbReference type="ChEBI" id="CHEBI:456216"/>
        <dbReference type="EC" id="3.6.4.13"/>
    </reaction>
</comment>
<comment type="subcellular location">
    <subcellularLocation>
        <location evidence="1">Nucleus</location>
    </subcellularLocation>
</comment>
<comment type="domain">
    <text>The Q motif is unique to and characteristic of the DEAD box family of RNA helicases and controls ATP binding and hydrolysis.</text>
</comment>
<comment type="similarity">
    <text evidence="5">Belongs to the DEAD box helicase family. DDX46/PRP5 subfamily.</text>
</comment>